<protein>
    <recommendedName>
        <fullName evidence="1">Methylthioribose-1-phosphate isomerase</fullName>
        <shortName evidence="1">M1Pi</shortName>
        <shortName evidence="1">MTR-1-P isomerase</shortName>
        <ecNumber evidence="1">5.3.1.23</ecNumber>
    </recommendedName>
    <alternativeName>
        <fullName evidence="1">S-methyl-5-thioribose-1-phosphate isomerase</fullName>
    </alternativeName>
</protein>
<organism>
    <name type="scientific">Rhodospirillum centenum (strain ATCC 51521 / SW)</name>
    <dbReference type="NCBI Taxonomy" id="414684"/>
    <lineage>
        <taxon>Bacteria</taxon>
        <taxon>Pseudomonadati</taxon>
        <taxon>Pseudomonadota</taxon>
        <taxon>Alphaproteobacteria</taxon>
        <taxon>Rhodospirillales</taxon>
        <taxon>Rhodospirillaceae</taxon>
        <taxon>Rhodospirillum</taxon>
    </lineage>
</organism>
<gene>
    <name evidence="1" type="primary">mtnA</name>
    <name type="ordered locus">RC1_2726</name>
</gene>
<comment type="function">
    <text evidence="1">Catalyzes the interconversion of methylthioribose-1-phosphate (MTR-1-P) into methylthioribulose-1-phosphate (MTRu-1-P).</text>
</comment>
<comment type="catalytic activity">
    <reaction evidence="1">
        <text>5-(methylsulfanyl)-alpha-D-ribose 1-phosphate = 5-(methylsulfanyl)-D-ribulose 1-phosphate</text>
        <dbReference type="Rhea" id="RHEA:19989"/>
        <dbReference type="ChEBI" id="CHEBI:58533"/>
        <dbReference type="ChEBI" id="CHEBI:58548"/>
        <dbReference type="EC" id="5.3.1.23"/>
    </reaction>
</comment>
<comment type="pathway">
    <text evidence="1">Amino-acid biosynthesis; L-methionine biosynthesis via salvage pathway; L-methionine from S-methyl-5-thio-alpha-D-ribose 1-phosphate: step 1/6.</text>
</comment>
<comment type="similarity">
    <text evidence="2">Belongs to the eIF-2B alpha/beta/delta subunits family. MtnA subfamily.</text>
</comment>
<keyword id="KW-0028">Amino-acid biosynthesis</keyword>
<keyword id="KW-0413">Isomerase</keyword>
<keyword id="KW-0486">Methionine biosynthesis</keyword>
<keyword id="KW-1185">Reference proteome</keyword>
<feature type="chain" id="PRO_1000187367" description="Methylthioribose-1-phosphate isomerase">
    <location>
        <begin position="1"/>
        <end position="375"/>
    </location>
</feature>
<feature type="active site" description="Proton donor" evidence="1">
    <location>
        <position position="243"/>
    </location>
</feature>
<feature type="binding site" evidence="1">
    <location>
        <begin position="53"/>
        <end position="55"/>
    </location>
    <ligand>
        <name>substrate</name>
    </ligand>
</feature>
<feature type="binding site" evidence="1">
    <location>
        <position position="90"/>
    </location>
    <ligand>
        <name>substrate</name>
    </ligand>
</feature>
<feature type="binding site" evidence="1">
    <location>
        <position position="202"/>
    </location>
    <ligand>
        <name>substrate</name>
    </ligand>
</feature>
<feature type="binding site" evidence="1">
    <location>
        <begin position="253"/>
        <end position="254"/>
    </location>
    <ligand>
        <name>substrate</name>
    </ligand>
</feature>
<feature type="site" description="Transition state stabilizer" evidence="1">
    <location>
        <position position="163"/>
    </location>
</feature>
<evidence type="ECO:0000255" key="1">
    <source>
        <dbReference type="HAMAP-Rule" id="MF_01678"/>
    </source>
</evidence>
<evidence type="ECO:0000305" key="2"/>
<sequence length="375" mass="40535">MKVDGIHRRTIWVDADGWSVGIIDQTALPFEFRTRRLTSLEEAAEAITTMAVRGAPLIGVTAAYGMALAMRADATDRAVEAAHDRLLATRPTAVNLRWGLARLREVLSVTPPADRVRRAYAEAAAIAEEDVEVCRAIGRHGMELIRGLHKRNPHRPVNLLTHCNAGWLATVDWGTATAPIYMAHDAGIPVHVWVDETRPRSQGAFLTAWELGHHGVPHTVVADNTGGHLMQHGLVDLAVVGTDRVTARGDVANKIGTYLKALAAHDTGVPFWVALPGSTIDWLLEDGVHGIPIETRGDEEVTEITGRTADGRIERVRIVADGSPVANYGFDVTPARLVTGFITERGLCAASQEGLAGLFPDQAERSARQRVANDA</sequence>
<reference key="1">
    <citation type="submission" date="2007-03" db="EMBL/GenBank/DDBJ databases">
        <title>Genome sequence of Rhodospirillum centenum.</title>
        <authorList>
            <person name="Touchman J.W."/>
            <person name="Bauer C."/>
            <person name="Blankenship R.E."/>
        </authorList>
    </citation>
    <scope>NUCLEOTIDE SEQUENCE [LARGE SCALE GENOMIC DNA]</scope>
    <source>
        <strain>ATCC 51521 / SW</strain>
    </source>
</reference>
<dbReference type="EC" id="5.3.1.23" evidence="1"/>
<dbReference type="EMBL" id="CP000613">
    <property type="protein sequence ID" value="ACJ00101.1"/>
    <property type="molecule type" value="Genomic_DNA"/>
</dbReference>
<dbReference type="RefSeq" id="WP_012567882.1">
    <property type="nucleotide sequence ID" value="NC_011420.2"/>
</dbReference>
<dbReference type="SMR" id="B6IUC1"/>
<dbReference type="STRING" id="414684.RC1_2726"/>
<dbReference type="KEGG" id="rce:RC1_2726"/>
<dbReference type="eggNOG" id="COG0182">
    <property type="taxonomic scope" value="Bacteria"/>
</dbReference>
<dbReference type="HOGENOM" id="CLU_016218_1_2_5"/>
<dbReference type="OrthoDB" id="9803436at2"/>
<dbReference type="UniPathway" id="UPA00904">
    <property type="reaction ID" value="UER00874"/>
</dbReference>
<dbReference type="Proteomes" id="UP000001591">
    <property type="component" value="Chromosome"/>
</dbReference>
<dbReference type="GO" id="GO:0046523">
    <property type="term" value="F:S-methyl-5-thioribose-1-phosphate isomerase activity"/>
    <property type="evidence" value="ECO:0007669"/>
    <property type="project" value="UniProtKB-UniRule"/>
</dbReference>
<dbReference type="GO" id="GO:0019509">
    <property type="term" value="P:L-methionine salvage from methylthioadenosine"/>
    <property type="evidence" value="ECO:0007669"/>
    <property type="project" value="UniProtKB-UniRule"/>
</dbReference>
<dbReference type="Gene3D" id="1.20.120.420">
    <property type="entry name" value="translation initiation factor eif-2b, domain 1"/>
    <property type="match status" value="1"/>
</dbReference>
<dbReference type="Gene3D" id="3.40.50.10470">
    <property type="entry name" value="Translation initiation factor eif-2b, domain 2"/>
    <property type="match status" value="1"/>
</dbReference>
<dbReference type="HAMAP" id="MF_01678">
    <property type="entry name" value="Salvage_MtnA"/>
    <property type="match status" value="1"/>
</dbReference>
<dbReference type="InterPro" id="IPR000649">
    <property type="entry name" value="IF-2B-related"/>
</dbReference>
<dbReference type="InterPro" id="IPR005251">
    <property type="entry name" value="IF-M1Pi"/>
</dbReference>
<dbReference type="InterPro" id="IPR042529">
    <property type="entry name" value="IF_2B-like_C"/>
</dbReference>
<dbReference type="InterPro" id="IPR011559">
    <property type="entry name" value="Initiation_fac_2B_a/b/d"/>
</dbReference>
<dbReference type="InterPro" id="IPR027363">
    <property type="entry name" value="M1Pi_N"/>
</dbReference>
<dbReference type="InterPro" id="IPR037171">
    <property type="entry name" value="NagB/RpiA_transferase-like"/>
</dbReference>
<dbReference type="NCBIfam" id="TIGR00524">
    <property type="entry name" value="eIF-2B_rel"/>
    <property type="match status" value="1"/>
</dbReference>
<dbReference type="NCBIfam" id="NF004326">
    <property type="entry name" value="PRK05720.1"/>
    <property type="match status" value="1"/>
</dbReference>
<dbReference type="NCBIfam" id="TIGR00512">
    <property type="entry name" value="salvage_mtnA"/>
    <property type="match status" value="1"/>
</dbReference>
<dbReference type="PANTHER" id="PTHR43475">
    <property type="entry name" value="METHYLTHIORIBOSE-1-PHOSPHATE ISOMERASE"/>
    <property type="match status" value="1"/>
</dbReference>
<dbReference type="PANTHER" id="PTHR43475:SF1">
    <property type="entry name" value="METHYLTHIORIBOSE-1-PHOSPHATE ISOMERASE"/>
    <property type="match status" value="1"/>
</dbReference>
<dbReference type="Pfam" id="PF01008">
    <property type="entry name" value="IF-2B"/>
    <property type="match status" value="1"/>
</dbReference>
<dbReference type="SUPFAM" id="SSF100950">
    <property type="entry name" value="NagB/RpiA/CoA transferase-like"/>
    <property type="match status" value="1"/>
</dbReference>
<proteinExistence type="inferred from homology"/>
<name>MTNA_RHOCS</name>
<accession>B6IUC1</accession>